<comment type="function">
    <text evidence="1">Cell wall formation. Catalyzes the addition of glutamate to the nucleotide precursor UDP-N-acetylmuramoyl-L-alanine (UMA).</text>
</comment>
<comment type="catalytic activity">
    <reaction evidence="1">
        <text>UDP-N-acetyl-alpha-D-muramoyl-L-alanine + D-glutamate + ATP = UDP-N-acetyl-alpha-D-muramoyl-L-alanyl-D-glutamate + ADP + phosphate + H(+)</text>
        <dbReference type="Rhea" id="RHEA:16429"/>
        <dbReference type="ChEBI" id="CHEBI:15378"/>
        <dbReference type="ChEBI" id="CHEBI:29986"/>
        <dbReference type="ChEBI" id="CHEBI:30616"/>
        <dbReference type="ChEBI" id="CHEBI:43474"/>
        <dbReference type="ChEBI" id="CHEBI:83898"/>
        <dbReference type="ChEBI" id="CHEBI:83900"/>
        <dbReference type="ChEBI" id="CHEBI:456216"/>
        <dbReference type="EC" id="6.3.2.9"/>
    </reaction>
</comment>
<comment type="pathway">
    <text evidence="1">Cell wall biogenesis; peptidoglycan biosynthesis.</text>
</comment>
<comment type="subcellular location">
    <subcellularLocation>
        <location evidence="1">Cytoplasm</location>
    </subcellularLocation>
</comment>
<comment type="similarity">
    <text evidence="1">Belongs to the MurCDEF family.</text>
</comment>
<accession>Q6N409</accession>
<keyword id="KW-0067">ATP-binding</keyword>
<keyword id="KW-0131">Cell cycle</keyword>
<keyword id="KW-0132">Cell division</keyword>
<keyword id="KW-0133">Cell shape</keyword>
<keyword id="KW-0961">Cell wall biogenesis/degradation</keyword>
<keyword id="KW-0963">Cytoplasm</keyword>
<keyword id="KW-0436">Ligase</keyword>
<keyword id="KW-0547">Nucleotide-binding</keyword>
<keyword id="KW-0573">Peptidoglycan synthesis</keyword>
<name>MURD_RHOPA</name>
<dbReference type="EC" id="6.3.2.9" evidence="1"/>
<dbReference type="EMBL" id="BX572604">
    <property type="protein sequence ID" value="CAE28973.1"/>
    <property type="molecule type" value="Genomic_DNA"/>
</dbReference>
<dbReference type="RefSeq" id="WP_011159072.1">
    <property type="nucleotide sequence ID" value="NZ_CP116810.1"/>
</dbReference>
<dbReference type="SMR" id="Q6N409"/>
<dbReference type="STRING" id="258594.RPA3532"/>
<dbReference type="GeneID" id="66894634"/>
<dbReference type="eggNOG" id="COG0771">
    <property type="taxonomic scope" value="Bacteria"/>
</dbReference>
<dbReference type="HOGENOM" id="CLU_032540_3_0_5"/>
<dbReference type="PhylomeDB" id="Q6N409"/>
<dbReference type="UniPathway" id="UPA00219"/>
<dbReference type="GO" id="GO:0005737">
    <property type="term" value="C:cytoplasm"/>
    <property type="evidence" value="ECO:0007669"/>
    <property type="project" value="UniProtKB-SubCell"/>
</dbReference>
<dbReference type="GO" id="GO:0005524">
    <property type="term" value="F:ATP binding"/>
    <property type="evidence" value="ECO:0007669"/>
    <property type="project" value="UniProtKB-UniRule"/>
</dbReference>
<dbReference type="GO" id="GO:0004326">
    <property type="term" value="F:tetrahydrofolylpolyglutamate synthase activity"/>
    <property type="evidence" value="ECO:0007669"/>
    <property type="project" value="InterPro"/>
</dbReference>
<dbReference type="GO" id="GO:0008764">
    <property type="term" value="F:UDP-N-acetylmuramoylalanine-D-glutamate ligase activity"/>
    <property type="evidence" value="ECO:0007669"/>
    <property type="project" value="UniProtKB-UniRule"/>
</dbReference>
<dbReference type="GO" id="GO:0051301">
    <property type="term" value="P:cell division"/>
    <property type="evidence" value="ECO:0007669"/>
    <property type="project" value="UniProtKB-KW"/>
</dbReference>
<dbReference type="GO" id="GO:0071555">
    <property type="term" value="P:cell wall organization"/>
    <property type="evidence" value="ECO:0007669"/>
    <property type="project" value="UniProtKB-KW"/>
</dbReference>
<dbReference type="GO" id="GO:0009252">
    <property type="term" value="P:peptidoglycan biosynthetic process"/>
    <property type="evidence" value="ECO:0007669"/>
    <property type="project" value="UniProtKB-UniRule"/>
</dbReference>
<dbReference type="GO" id="GO:0008360">
    <property type="term" value="P:regulation of cell shape"/>
    <property type="evidence" value="ECO:0007669"/>
    <property type="project" value="UniProtKB-KW"/>
</dbReference>
<dbReference type="Gene3D" id="3.90.190.20">
    <property type="entry name" value="Mur ligase, C-terminal domain"/>
    <property type="match status" value="1"/>
</dbReference>
<dbReference type="Gene3D" id="3.40.1190.10">
    <property type="entry name" value="Mur-like, catalytic domain"/>
    <property type="match status" value="1"/>
</dbReference>
<dbReference type="Gene3D" id="3.40.50.720">
    <property type="entry name" value="NAD(P)-binding Rossmann-like Domain"/>
    <property type="match status" value="1"/>
</dbReference>
<dbReference type="HAMAP" id="MF_00639">
    <property type="entry name" value="MurD"/>
    <property type="match status" value="1"/>
</dbReference>
<dbReference type="InterPro" id="IPR018109">
    <property type="entry name" value="Folylpolyglutamate_synth_CS"/>
</dbReference>
<dbReference type="InterPro" id="IPR036565">
    <property type="entry name" value="Mur-like_cat_sf"/>
</dbReference>
<dbReference type="InterPro" id="IPR004101">
    <property type="entry name" value="Mur_ligase_C"/>
</dbReference>
<dbReference type="InterPro" id="IPR036615">
    <property type="entry name" value="Mur_ligase_C_dom_sf"/>
</dbReference>
<dbReference type="InterPro" id="IPR013221">
    <property type="entry name" value="Mur_ligase_cen"/>
</dbReference>
<dbReference type="InterPro" id="IPR005762">
    <property type="entry name" value="MurD"/>
</dbReference>
<dbReference type="NCBIfam" id="TIGR01087">
    <property type="entry name" value="murD"/>
    <property type="match status" value="1"/>
</dbReference>
<dbReference type="PANTHER" id="PTHR43692">
    <property type="entry name" value="UDP-N-ACETYLMURAMOYLALANINE--D-GLUTAMATE LIGASE"/>
    <property type="match status" value="1"/>
</dbReference>
<dbReference type="PANTHER" id="PTHR43692:SF1">
    <property type="entry name" value="UDP-N-ACETYLMURAMOYLALANINE--D-GLUTAMATE LIGASE"/>
    <property type="match status" value="1"/>
</dbReference>
<dbReference type="Pfam" id="PF02875">
    <property type="entry name" value="Mur_ligase_C"/>
    <property type="match status" value="1"/>
</dbReference>
<dbReference type="Pfam" id="PF08245">
    <property type="entry name" value="Mur_ligase_M"/>
    <property type="match status" value="1"/>
</dbReference>
<dbReference type="SUPFAM" id="SSF51984">
    <property type="entry name" value="MurCD N-terminal domain"/>
    <property type="match status" value="1"/>
</dbReference>
<dbReference type="SUPFAM" id="SSF53623">
    <property type="entry name" value="MurD-like peptide ligases, catalytic domain"/>
    <property type="match status" value="1"/>
</dbReference>
<dbReference type="SUPFAM" id="SSF53244">
    <property type="entry name" value="MurD-like peptide ligases, peptide-binding domain"/>
    <property type="match status" value="1"/>
</dbReference>
<protein>
    <recommendedName>
        <fullName evidence="1">UDP-N-acetylmuramoylalanine--D-glutamate ligase</fullName>
        <ecNumber evidence="1">6.3.2.9</ecNumber>
    </recommendedName>
    <alternativeName>
        <fullName evidence="1">D-glutamic acid-adding enzyme</fullName>
    </alternativeName>
    <alternativeName>
        <fullName evidence="1">UDP-N-acetylmuramoyl-L-alanyl-D-glutamate synthetase</fullName>
    </alternativeName>
</protein>
<sequence>MIPVTSFAGQSVAVFGLGGSGLASCHALKAGGAEVIACDDNLDRMVEAAQAGFITADLRNLPWTNFAALVLTPGVPLTHPAPHWTVLKAQEAGVEVIGDVELFCRERKAHAPRAPFVAITGTNGKSTTTALIAHLLREAGWDTQLGGNIGTAILSLEPPKDGRVHVIEMSSYQIDLTPSLDPTVGILLNVTEDHIDRHGTIEHYAAVKERLVAGVQDGGTSIIGVDDEFGRAAADRIERAGKRVVRMSVQGPVTFGITADLDSIRRVDGGTSTEVAKLGGIGSLRGLHNAQNAAAAAAAVLALGVSPEVLQQGLRSFPGLAHRMEQVGRQVGEQGTTLFVNDSKATNADAAAKALASFGDIFWIAGGKPKTGGIESLAEYFPRIRKAYLIGQAAQEFAATLEGRVPYEISETLEAAVPAAARDAAASGLAEPVVLLSPACASFDQFRNFELRGTRFRELVTALDGVAAV</sequence>
<proteinExistence type="inferred from homology"/>
<organism>
    <name type="scientific">Rhodopseudomonas palustris (strain ATCC BAA-98 / CGA009)</name>
    <dbReference type="NCBI Taxonomy" id="258594"/>
    <lineage>
        <taxon>Bacteria</taxon>
        <taxon>Pseudomonadati</taxon>
        <taxon>Pseudomonadota</taxon>
        <taxon>Alphaproteobacteria</taxon>
        <taxon>Hyphomicrobiales</taxon>
        <taxon>Nitrobacteraceae</taxon>
        <taxon>Rhodopseudomonas</taxon>
    </lineage>
</organism>
<gene>
    <name evidence="1" type="primary">murD</name>
    <name type="ordered locus">RPA3532</name>
</gene>
<evidence type="ECO:0000255" key="1">
    <source>
        <dbReference type="HAMAP-Rule" id="MF_00639"/>
    </source>
</evidence>
<feature type="chain" id="PRO_0000109070" description="UDP-N-acetylmuramoylalanine--D-glutamate ligase">
    <location>
        <begin position="1"/>
        <end position="469"/>
    </location>
</feature>
<feature type="binding site" evidence="1">
    <location>
        <begin position="121"/>
        <end position="127"/>
    </location>
    <ligand>
        <name>ATP</name>
        <dbReference type="ChEBI" id="CHEBI:30616"/>
    </ligand>
</feature>
<reference key="1">
    <citation type="journal article" date="2004" name="Nat. Biotechnol.">
        <title>Complete genome sequence of the metabolically versatile photosynthetic bacterium Rhodopseudomonas palustris.</title>
        <authorList>
            <person name="Larimer F.W."/>
            <person name="Chain P."/>
            <person name="Hauser L."/>
            <person name="Lamerdin J.E."/>
            <person name="Malfatti S."/>
            <person name="Do L."/>
            <person name="Land M.L."/>
            <person name="Pelletier D.A."/>
            <person name="Beatty J.T."/>
            <person name="Lang A.S."/>
            <person name="Tabita F.R."/>
            <person name="Gibson J.L."/>
            <person name="Hanson T.E."/>
            <person name="Bobst C."/>
            <person name="Torres y Torres J.L."/>
            <person name="Peres C."/>
            <person name="Harrison F.H."/>
            <person name="Gibson J."/>
            <person name="Harwood C.S."/>
        </authorList>
    </citation>
    <scope>NUCLEOTIDE SEQUENCE [LARGE SCALE GENOMIC DNA]</scope>
    <source>
        <strain>ATCC BAA-98 / CGA009</strain>
    </source>
</reference>